<comment type="catalytic activity">
    <reaction evidence="1">
        <text>(2R)-3-phosphoglycerate + ATP = (2R)-3-phospho-glyceroyl phosphate + ADP</text>
        <dbReference type="Rhea" id="RHEA:14801"/>
        <dbReference type="ChEBI" id="CHEBI:30616"/>
        <dbReference type="ChEBI" id="CHEBI:57604"/>
        <dbReference type="ChEBI" id="CHEBI:58272"/>
        <dbReference type="ChEBI" id="CHEBI:456216"/>
        <dbReference type="EC" id="2.7.2.3"/>
    </reaction>
</comment>
<comment type="pathway">
    <text evidence="1">Carbohydrate degradation; glycolysis; pyruvate from D-glyceraldehyde 3-phosphate: step 2/5.</text>
</comment>
<comment type="subunit">
    <text evidence="1">Monomer.</text>
</comment>
<comment type="subcellular location">
    <subcellularLocation>
        <location evidence="1">Cytoplasm</location>
    </subcellularLocation>
</comment>
<comment type="similarity">
    <text evidence="1">Belongs to the phosphoglycerate kinase family.</text>
</comment>
<reference key="1">
    <citation type="journal article" date="2002" name="Nature">
        <title>Genome sequence of the plant pathogen Ralstonia solanacearum.</title>
        <authorList>
            <person name="Salanoubat M."/>
            <person name="Genin S."/>
            <person name="Artiguenave F."/>
            <person name="Gouzy J."/>
            <person name="Mangenot S."/>
            <person name="Arlat M."/>
            <person name="Billault A."/>
            <person name="Brottier P."/>
            <person name="Camus J.-C."/>
            <person name="Cattolico L."/>
            <person name="Chandler M."/>
            <person name="Choisne N."/>
            <person name="Claudel-Renard C."/>
            <person name="Cunnac S."/>
            <person name="Demange N."/>
            <person name="Gaspin C."/>
            <person name="Lavie M."/>
            <person name="Moisan A."/>
            <person name="Robert C."/>
            <person name="Saurin W."/>
            <person name="Schiex T."/>
            <person name="Siguier P."/>
            <person name="Thebault P."/>
            <person name="Whalen M."/>
            <person name="Wincker P."/>
            <person name="Levy M."/>
            <person name="Weissenbach J."/>
            <person name="Boucher C.A."/>
        </authorList>
    </citation>
    <scope>NUCLEOTIDE SEQUENCE [LARGE SCALE GENOMIC DNA]</scope>
    <source>
        <strain>ATCC BAA-1114 / GMI1000</strain>
    </source>
</reference>
<proteinExistence type="inferred from homology"/>
<gene>
    <name evidence="1" type="primary">pgk</name>
    <name type="ordered locus">RSc0571</name>
    <name type="ORF">RS04894</name>
</gene>
<feature type="chain" id="PRO_0000145991" description="Phosphoglycerate kinase">
    <location>
        <begin position="1"/>
        <end position="419"/>
    </location>
</feature>
<feature type="binding site" evidence="1">
    <location>
        <begin position="42"/>
        <end position="44"/>
    </location>
    <ligand>
        <name>substrate</name>
    </ligand>
</feature>
<feature type="binding site" evidence="1">
    <location>
        <position position="58"/>
    </location>
    <ligand>
        <name>substrate</name>
    </ligand>
</feature>
<feature type="binding site" evidence="1">
    <location>
        <begin position="81"/>
        <end position="84"/>
    </location>
    <ligand>
        <name>substrate</name>
    </ligand>
</feature>
<feature type="binding site" evidence="1">
    <location>
        <position position="135"/>
    </location>
    <ligand>
        <name>substrate</name>
    </ligand>
</feature>
<feature type="binding site" evidence="1">
    <location>
        <position position="168"/>
    </location>
    <ligand>
        <name>substrate</name>
    </ligand>
</feature>
<feature type="binding site" evidence="1">
    <location>
        <position position="219"/>
    </location>
    <ligand>
        <name>ATP</name>
        <dbReference type="ChEBI" id="CHEBI:30616"/>
    </ligand>
</feature>
<feature type="binding site" evidence="1">
    <location>
        <position position="341"/>
    </location>
    <ligand>
        <name>ATP</name>
        <dbReference type="ChEBI" id="CHEBI:30616"/>
    </ligand>
</feature>
<feature type="binding site" evidence="1">
    <location>
        <begin position="367"/>
        <end position="370"/>
    </location>
    <ligand>
        <name>ATP</name>
        <dbReference type="ChEBI" id="CHEBI:30616"/>
    </ligand>
</feature>
<accession>Q8Y1W6</accession>
<protein>
    <recommendedName>
        <fullName evidence="1">Phosphoglycerate kinase</fullName>
        <ecNumber evidence="1">2.7.2.3</ecNumber>
    </recommendedName>
</protein>
<sequence>MASGKIAAFRDFSAAAMPNVLRLTDLISEGKLAGKRVFIRADLNVPQDDAGNITEDTRIRASVPAIRAALDAGAAVMVTSHLGRPTEGEFKPEDSLAPVAVRLSELLGCEVKLVQNWVDGVDVAPGQVVLLENCRVNKGEKKNSDELAQKMAKLCDVYVNDAFGTAHRAEATTHGIAKFAPIACAGPLLGAELDALGKALGQPARPLVAIVAGSKVSTKLTILKSLADKVDNLIVGGGIANTFMLAAGLKIGKSLAEADLVGDAKAIIDLMAARGASVPIPVDVVCAKEFSATAAATVKDVKDVADDDMILDIGPKTAAQLADQLKASGTIVWNGPVGVFEFDQFGNGTKVLAEAIAASSGFSIAGGGDTLAAIAKYGIADRVGYISTGGGAFLEFLEGKTLPAVEILEQRAQRQEALA</sequence>
<dbReference type="EC" id="2.7.2.3" evidence="1"/>
<dbReference type="EMBL" id="AL646052">
    <property type="protein sequence ID" value="CAD14101.1"/>
    <property type="molecule type" value="Genomic_DNA"/>
</dbReference>
<dbReference type="SMR" id="Q8Y1W6"/>
<dbReference type="STRING" id="267608.RSc0571"/>
<dbReference type="EnsemblBacteria" id="CAD14101">
    <property type="protein sequence ID" value="CAD14101"/>
    <property type="gene ID" value="RSc0571"/>
</dbReference>
<dbReference type="KEGG" id="rso:RSc0571"/>
<dbReference type="eggNOG" id="COG0126">
    <property type="taxonomic scope" value="Bacteria"/>
</dbReference>
<dbReference type="HOGENOM" id="CLU_025427_0_2_4"/>
<dbReference type="UniPathway" id="UPA00109">
    <property type="reaction ID" value="UER00185"/>
</dbReference>
<dbReference type="Proteomes" id="UP000001436">
    <property type="component" value="Chromosome"/>
</dbReference>
<dbReference type="GO" id="GO:0005829">
    <property type="term" value="C:cytosol"/>
    <property type="evidence" value="ECO:0007669"/>
    <property type="project" value="TreeGrafter"/>
</dbReference>
<dbReference type="GO" id="GO:0043531">
    <property type="term" value="F:ADP binding"/>
    <property type="evidence" value="ECO:0007669"/>
    <property type="project" value="TreeGrafter"/>
</dbReference>
<dbReference type="GO" id="GO:0005524">
    <property type="term" value="F:ATP binding"/>
    <property type="evidence" value="ECO:0007669"/>
    <property type="project" value="UniProtKB-KW"/>
</dbReference>
<dbReference type="GO" id="GO:0004618">
    <property type="term" value="F:phosphoglycerate kinase activity"/>
    <property type="evidence" value="ECO:0007669"/>
    <property type="project" value="UniProtKB-UniRule"/>
</dbReference>
<dbReference type="GO" id="GO:0006094">
    <property type="term" value="P:gluconeogenesis"/>
    <property type="evidence" value="ECO:0007669"/>
    <property type="project" value="TreeGrafter"/>
</dbReference>
<dbReference type="GO" id="GO:0006096">
    <property type="term" value="P:glycolytic process"/>
    <property type="evidence" value="ECO:0007669"/>
    <property type="project" value="UniProtKB-UniRule"/>
</dbReference>
<dbReference type="FunFam" id="3.40.50.1260:FF:000001">
    <property type="entry name" value="Phosphoglycerate kinase"/>
    <property type="match status" value="1"/>
</dbReference>
<dbReference type="FunFam" id="3.40.50.1260:FF:000002">
    <property type="entry name" value="Phosphoglycerate kinase"/>
    <property type="match status" value="1"/>
</dbReference>
<dbReference type="Gene3D" id="3.40.50.1260">
    <property type="entry name" value="Phosphoglycerate kinase, N-terminal domain"/>
    <property type="match status" value="2"/>
</dbReference>
<dbReference type="HAMAP" id="MF_00145">
    <property type="entry name" value="Phosphoglyc_kinase"/>
    <property type="match status" value="1"/>
</dbReference>
<dbReference type="InterPro" id="IPR001576">
    <property type="entry name" value="Phosphoglycerate_kinase"/>
</dbReference>
<dbReference type="InterPro" id="IPR015911">
    <property type="entry name" value="Phosphoglycerate_kinase_CS"/>
</dbReference>
<dbReference type="InterPro" id="IPR015824">
    <property type="entry name" value="Phosphoglycerate_kinase_N"/>
</dbReference>
<dbReference type="InterPro" id="IPR036043">
    <property type="entry name" value="Phosphoglycerate_kinase_sf"/>
</dbReference>
<dbReference type="PANTHER" id="PTHR11406">
    <property type="entry name" value="PHOSPHOGLYCERATE KINASE"/>
    <property type="match status" value="1"/>
</dbReference>
<dbReference type="PANTHER" id="PTHR11406:SF23">
    <property type="entry name" value="PHOSPHOGLYCERATE KINASE 1, CHLOROPLASTIC-RELATED"/>
    <property type="match status" value="1"/>
</dbReference>
<dbReference type="Pfam" id="PF00162">
    <property type="entry name" value="PGK"/>
    <property type="match status" value="1"/>
</dbReference>
<dbReference type="PIRSF" id="PIRSF000724">
    <property type="entry name" value="Pgk"/>
    <property type="match status" value="1"/>
</dbReference>
<dbReference type="PRINTS" id="PR00477">
    <property type="entry name" value="PHGLYCKINASE"/>
</dbReference>
<dbReference type="SUPFAM" id="SSF53748">
    <property type="entry name" value="Phosphoglycerate kinase"/>
    <property type="match status" value="1"/>
</dbReference>
<dbReference type="PROSITE" id="PS00111">
    <property type="entry name" value="PGLYCERATE_KINASE"/>
    <property type="match status" value="1"/>
</dbReference>
<evidence type="ECO:0000255" key="1">
    <source>
        <dbReference type="HAMAP-Rule" id="MF_00145"/>
    </source>
</evidence>
<name>PGK_RALN1</name>
<organism>
    <name type="scientific">Ralstonia nicotianae (strain ATCC BAA-1114 / GMI1000)</name>
    <name type="common">Ralstonia solanacearum</name>
    <dbReference type="NCBI Taxonomy" id="267608"/>
    <lineage>
        <taxon>Bacteria</taxon>
        <taxon>Pseudomonadati</taxon>
        <taxon>Pseudomonadota</taxon>
        <taxon>Betaproteobacteria</taxon>
        <taxon>Burkholderiales</taxon>
        <taxon>Burkholderiaceae</taxon>
        <taxon>Ralstonia</taxon>
        <taxon>Ralstonia solanacearum species complex</taxon>
    </lineage>
</organism>
<keyword id="KW-0067">ATP-binding</keyword>
<keyword id="KW-0963">Cytoplasm</keyword>
<keyword id="KW-0324">Glycolysis</keyword>
<keyword id="KW-0418">Kinase</keyword>
<keyword id="KW-0547">Nucleotide-binding</keyword>
<keyword id="KW-1185">Reference proteome</keyword>
<keyword id="KW-0808">Transferase</keyword>